<accession>Q6EW45</accession>
<feature type="chain" id="PRO_0000358288" description="NAD(P)H-quinone oxidoreductase subunit J, chloroplastic">
    <location>
        <begin position="1"/>
        <end position="158"/>
    </location>
</feature>
<keyword id="KW-0150">Chloroplast</keyword>
<keyword id="KW-0472">Membrane</keyword>
<keyword id="KW-0520">NAD</keyword>
<keyword id="KW-0521">NADP</keyword>
<keyword id="KW-0934">Plastid</keyword>
<keyword id="KW-0618">Plastoquinone</keyword>
<keyword id="KW-0874">Quinone</keyword>
<keyword id="KW-0793">Thylakoid</keyword>
<keyword id="KW-1278">Translocase</keyword>
<keyword id="KW-0813">Transport</keyword>
<evidence type="ECO:0000255" key="1">
    <source>
        <dbReference type="HAMAP-Rule" id="MF_01357"/>
    </source>
</evidence>
<reference key="1">
    <citation type="journal article" date="2004" name="Mol. Biol. Evol.">
        <title>The chloroplast genome of Nymphaea alba: whole-genome analyses and the problem of identifying the most basal angiosperm.</title>
        <authorList>
            <person name="Goremykin V.V."/>
            <person name="Hirsch-Ernst K.I."/>
            <person name="Woelfl S."/>
            <person name="Hellwig F.H."/>
        </authorList>
    </citation>
    <scope>NUCLEOTIDE SEQUENCE [LARGE SCALE GENOMIC DNA]</scope>
</reference>
<name>NDHJ_NYMAL</name>
<comment type="function">
    <text evidence="1">NDH shuttles electrons from NAD(P)H:plastoquinone, via FMN and iron-sulfur (Fe-S) centers, to quinones in the photosynthetic chain and possibly in a chloroplast respiratory chain. The immediate electron acceptor for the enzyme in this species is believed to be plastoquinone. Couples the redox reaction to proton translocation, and thus conserves the redox energy in a proton gradient.</text>
</comment>
<comment type="catalytic activity">
    <reaction evidence="1">
        <text>a plastoquinone + NADH + (n+1) H(+)(in) = a plastoquinol + NAD(+) + n H(+)(out)</text>
        <dbReference type="Rhea" id="RHEA:42608"/>
        <dbReference type="Rhea" id="RHEA-COMP:9561"/>
        <dbReference type="Rhea" id="RHEA-COMP:9562"/>
        <dbReference type="ChEBI" id="CHEBI:15378"/>
        <dbReference type="ChEBI" id="CHEBI:17757"/>
        <dbReference type="ChEBI" id="CHEBI:57540"/>
        <dbReference type="ChEBI" id="CHEBI:57945"/>
        <dbReference type="ChEBI" id="CHEBI:62192"/>
    </reaction>
</comment>
<comment type="catalytic activity">
    <reaction evidence="1">
        <text>a plastoquinone + NADPH + (n+1) H(+)(in) = a plastoquinol + NADP(+) + n H(+)(out)</text>
        <dbReference type="Rhea" id="RHEA:42612"/>
        <dbReference type="Rhea" id="RHEA-COMP:9561"/>
        <dbReference type="Rhea" id="RHEA-COMP:9562"/>
        <dbReference type="ChEBI" id="CHEBI:15378"/>
        <dbReference type="ChEBI" id="CHEBI:17757"/>
        <dbReference type="ChEBI" id="CHEBI:57783"/>
        <dbReference type="ChEBI" id="CHEBI:58349"/>
        <dbReference type="ChEBI" id="CHEBI:62192"/>
    </reaction>
</comment>
<comment type="subunit">
    <text evidence="1">NDH is composed of at least 16 different subunits, 5 of which are encoded in the nucleus.</text>
</comment>
<comment type="subcellular location">
    <subcellularLocation>
        <location evidence="1">Plastid</location>
        <location evidence="1">Chloroplast thylakoid membrane</location>
        <topology evidence="1">Peripheral membrane protein</topology>
        <orientation evidence="1">Stromal side</orientation>
    </subcellularLocation>
</comment>
<comment type="similarity">
    <text evidence="1">Belongs to the complex I 30 kDa subunit family.</text>
</comment>
<proteinExistence type="inferred from homology"/>
<organism>
    <name type="scientific">Nymphaea alba</name>
    <name type="common">White water-lily</name>
    <name type="synonym">Castalia alba</name>
    <dbReference type="NCBI Taxonomy" id="34301"/>
    <lineage>
        <taxon>Eukaryota</taxon>
        <taxon>Viridiplantae</taxon>
        <taxon>Streptophyta</taxon>
        <taxon>Embryophyta</taxon>
        <taxon>Tracheophyta</taxon>
        <taxon>Spermatophyta</taxon>
        <taxon>Magnoliopsida</taxon>
        <taxon>Nymphaeales</taxon>
        <taxon>Nymphaeaceae</taxon>
        <taxon>Nymphaea</taxon>
    </lineage>
</organism>
<sequence>MQGRSSAWLVKHELVHRSLGFDYQGVETLQIKPEDWYSIAVISYVYGYNYLRSQCAYDVAPGGLLASVYHLTRIQYGVDQPEEVCIKVFVPRSNPRIPSVFWIWKSADFQERESYDMLGISYDNHPRMKRILMPESWIGWPLRKDYIAPNFYELQDAY</sequence>
<dbReference type="EC" id="7.1.1.-" evidence="1"/>
<dbReference type="EMBL" id="AJ627251">
    <property type="protein sequence ID" value="CAF28596.1"/>
    <property type="molecule type" value="Genomic_DNA"/>
</dbReference>
<dbReference type="RefSeq" id="YP_053158.1">
    <property type="nucleotide sequence ID" value="NC_006050.1"/>
</dbReference>
<dbReference type="SMR" id="Q6EW45"/>
<dbReference type="GeneID" id="2896170"/>
<dbReference type="GO" id="GO:0009535">
    <property type="term" value="C:chloroplast thylakoid membrane"/>
    <property type="evidence" value="ECO:0007669"/>
    <property type="project" value="UniProtKB-SubCell"/>
</dbReference>
<dbReference type="GO" id="GO:0008137">
    <property type="term" value="F:NADH dehydrogenase (ubiquinone) activity"/>
    <property type="evidence" value="ECO:0007669"/>
    <property type="project" value="InterPro"/>
</dbReference>
<dbReference type="GO" id="GO:0048038">
    <property type="term" value="F:quinone binding"/>
    <property type="evidence" value="ECO:0007669"/>
    <property type="project" value="UniProtKB-KW"/>
</dbReference>
<dbReference type="GO" id="GO:0019684">
    <property type="term" value="P:photosynthesis, light reaction"/>
    <property type="evidence" value="ECO:0007669"/>
    <property type="project" value="UniProtKB-UniRule"/>
</dbReference>
<dbReference type="FunFam" id="3.30.460.80:FF:000004">
    <property type="entry name" value="NAD(P)H-quinone oxidoreductase subunit J, chloroplastic"/>
    <property type="match status" value="1"/>
</dbReference>
<dbReference type="Gene3D" id="3.30.460.80">
    <property type="entry name" value="NADH:ubiquinone oxidoreductase, 30kDa subunit"/>
    <property type="match status" value="1"/>
</dbReference>
<dbReference type="HAMAP" id="MF_01357">
    <property type="entry name" value="NDH1_NuoC"/>
    <property type="match status" value="1"/>
</dbReference>
<dbReference type="InterPro" id="IPR010218">
    <property type="entry name" value="NADH_DH_suC"/>
</dbReference>
<dbReference type="InterPro" id="IPR037232">
    <property type="entry name" value="NADH_quin_OxRdtase_su_C/D-like"/>
</dbReference>
<dbReference type="InterPro" id="IPR001268">
    <property type="entry name" value="NADH_UbQ_OxRdtase_30kDa_su"/>
</dbReference>
<dbReference type="InterPro" id="IPR020396">
    <property type="entry name" value="NADH_UbQ_OxRdtase_CS"/>
</dbReference>
<dbReference type="NCBIfam" id="NF009141">
    <property type="entry name" value="PRK12494.1"/>
    <property type="match status" value="1"/>
</dbReference>
<dbReference type="PANTHER" id="PTHR10884:SF14">
    <property type="entry name" value="NADH DEHYDROGENASE [UBIQUINONE] IRON-SULFUR PROTEIN 3, MITOCHONDRIAL"/>
    <property type="match status" value="1"/>
</dbReference>
<dbReference type="PANTHER" id="PTHR10884">
    <property type="entry name" value="NADH DEHYDROGENASE UBIQUINONE IRON-SULFUR PROTEIN 3"/>
    <property type="match status" value="1"/>
</dbReference>
<dbReference type="Pfam" id="PF00329">
    <property type="entry name" value="Complex1_30kDa"/>
    <property type="match status" value="1"/>
</dbReference>
<dbReference type="SUPFAM" id="SSF143243">
    <property type="entry name" value="Nqo5-like"/>
    <property type="match status" value="1"/>
</dbReference>
<dbReference type="PROSITE" id="PS00542">
    <property type="entry name" value="COMPLEX1_30K"/>
    <property type="match status" value="1"/>
</dbReference>
<protein>
    <recommendedName>
        <fullName evidence="1">NAD(P)H-quinone oxidoreductase subunit J, chloroplastic</fullName>
        <ecNumber evidence="1">7.1.1.-</ecNumber>
    </recommendedName>
    <alternativeName>
        <fullName>NAD(P)H dehydrogenase subunit J</fullName>
    </alternativeName>
    <alternativeName>
        <fullName evidence="1">NADH-plastoquinone oxidoreductase subunit J</fullName>
    </alternativeName>
</protein>
<geneLocation type="chloroplast"/>
<gene>
    <name evidence="1" type="primary">ndhJ</name>
</gene>